<organismHost>
    <name type="scientific">Ornithodoros</name>
    <name type="common">relapsing fever ticks</name>
    <dbReference type="NCBI Taxonomy" id="6937"/>
</organismHost>
<organismHost>
    <name type="scientific">Phacochoerus aethiopicus</name>
    <name type="common">Warthog</name>
    <dbReference type="NCBI Taxonomy" id="85517"/>
</organismHost>
<organismHost>
    <name type="scientific">Phacochoerus africanus</name>
    <name type="common">Warthog</name>
    <dbReference type="NCBI Taxonomy" id="41426"/>
</organismHost>
<organismHost>
    <name type="scientific">Potamochoerus larvatus</name>
    <name type="common">Bushpig</name>
    <dbReference type="NCBI Taxonomy" id="273792"/>
</organismHost>
<organismHost>
    <name type="scientific">Sus scrofa</name>
    <name type="common">Pig</name>
    <dbReference type="NCBI Taxonomy" id="9823"/>
</organismHost>
<reference key="1">
    <citation type="submission" date="2003-03" db="EMBL/GenBank/DDBJ databases">
        <title>African swine fever virus genomes.</title>
        <authorList>
            <person name="Kutish G.F."/>
            <person name="Rock D.L."/>
        </authorList>
    </citation>
    <scope>NUCLEOTIDE SEQUENCE [LARGE SCALE GENOMIC DNA]</scope>
</reference>
<comment type="function">
    <text evidence="1">Plays a role in virus cell tropism, and may be required for efficient virus replication in macrophages.</text>
</comment>
<comment type="similarity">
    <text evidence="2">Belongs to the asfivirus MGF 505 family.</text>
</comment>
<proteinExistence type="inferred from homology"/>
<feature type="chain" id="PRO_0000373316" description="Protein MGF 505-1R">
    <location>
        <begin position="1"/>
        <end position="531"/>
    </location>
</feature>
<dbReference type="EMBL" id="AY261366">
    <property type="status" value="NOT_ANNOTATED_CDS"/>
    <property type="molecule type" value="Genomic_DNA"/>
</dbReference>
<dbReference type="SMR" id="P0C9S6"/>
<dbReference type="Proteomes" id="UP000000858">
    <property type="component" value="Segment"/>
</dbReference>
<dbReference type="InterPro" id="IPR004858">
    <property type="entry name" value="MGF_505"/>
</dbReference>
<dbReference type="Pfam" id="PF03158">
    <property type="entry name" value="DUF249"/>
    <property type="match status" value="1"/>
</dbReference>
<evidence type="ECO:0000250" key="1"/>
<evidence type="ECO:0000305" key="2"/>
<sequence length="531" mass="62881">MFSLQNLCRKTLPDCKLPEFFDEYILQLLGLYWENHGTIQRAGNNCVLIQQHTLIPVNEALRIAASEENYEIVSLLLAWEGNLYYAIIGALEGNRHDLIRKYDDQIKDHHEILPFIDDPVIFHKCHIMRRCFFDCILYQAVKYSKFRVLLYFKYRLENDLPLAHLLIKKACEDHNYEVIKWIYENLHIYNIMDTFGCAIAHKDLRLYRLGYTFIYNRIVPYKYHYLDVLILSGLHLLYKVAAKGYLDFILETLKYDHNNDNLDIILTQAATYNHRKILTYYIPQLTYAQIEQCLFMAIKKKSSKKTLNLLLSHLKLSIKLIKKISQYVATYNSTNIIGILNMRRKKKIYLDIILTKFVKKAIFNKFVVRCMDTFSINPERIIKMAARINKMLLVKKISEHAWKNHAARLKHLKHAVYTMKHKDGKNRLMNLIYDHYYYHMQGEEIFSLARFYAIHHAPKLFDVFYDCCLLDTIRFKNLLLDCSHIIGKNAHDATNITIVNKYIGNLFAMGVLSKKEILQDYPSIYSKHYMP</sequence>
<protein>
    <recommendedName>
        <fullName>Protein MGF 505-1R</fullName>
    </recommendedName>
</protein>
<accession>P0C9S6</accession>
<gene>
    <name type="ordered locus">War-002</name>
</gene>
<name>5051R_ASFWA</name>
<organism>
    <name type="scientific">African swine fever virus (isolate Warthog/Namibia/Wart80/1980)</name>
    <name type="common">ASFV</name>
    <dbReference type="NCBI Taxonomy" id="561444"/>
    <lineage>
        <taxon>Viruses</taxon>
        <taxon>Varidnaviria</taxon>
        <taxon>Bamfordvirae</taxon>
        <taxon>Nucleocytoviricota</taxon>
        <taxon>Pokkesviricetes</taxon>
        <taxon>Asfuvirales</taxon>
        <taxon>Asfarviridae</taxon>
        <taxon>Asfivirus</taxon>
        <taxon>African swine fever virus</taxon>
    </lineage>
</organism>